<accession>P69341</accession>
<accession>A6QQW2</accession>
<organism>
    <name type="scientific">Bos taurus</name>
    <name type="common">Bovine</name>
    <dbReference type="NCBI Taxonomy" id="9913"/>
    <lineage>
        <taxon>Eukaryota</taxon>
        <taxon>Metazoa</taxon>
        <taxon>Chordata</taxon>
        <taxon>Craniata</taxon>
        <taxon>Vertebrata</taxon>
        <taxon>Euteleostomi</taxon>
        <taxon>Mammalia</taxon>
        <taxon>Eutheria</taxon>
        <taxon>Laurasiatheria</taxon>
        <taxon>Artiodactyla</taxon>
        <taxon>Ruminantia</taxon>
        <taxon>Pecora</taxon>
        <taxon>Bovidae</taxon>
        <taxon>Bovinae</taxon>
        <taxon>Bos</taxon>
    </lineage>
</organism>
<gene>
    <name type="primary">PARN</name>
    <name type="synonym">DAN</name>
</gene>
<reference key="1">
    <citation type="submission" date="2007-07" db="EMBL/GenBank/DDBJ databases">
        <authorList>
            <consortium name="NIH - Mammalian Gene Collection (MGC) project"/>
        </authorList>
    </citation>
    <scope>NUCLEOTIDE SEQUENCE [LARGE SCALE MRNA]</scope>
    <source>
        <strain>Hereford</strain>
        <tissue>Thymus</tissue>
    </source>
</reference>
<reference key="2">
    <citation type="journal article" date="1998" name="EMBO J.">
        <title>The deadenylating nuclease (DAN) is involved in poly(A) tail removal during the meiotic maturation of Xenopus oocytes.</title>
        <authorList>
            <person name="Koerner C.G."/>
            <person name="Wormington M."/>
            <person name="Muckenthaler M."/>
            <person name="Schneider S."/>
            <person name="Dehlin E."/>
            <person name="Wahle E."/>
        </authorList>
    </citation>
    <scope>PROTEIN SEQUENCE OF 86-105; 259-267; 421-429 AND 499-514</scope>
    <scope>FUNCTION</scope>
</reference>
<reference key="3">
    <citation type="journal article" date="1997" name="J. Biol. Chem.">
        <title>Poly(A) tail shortening by a mammalian poly(A)-specific 3'-exoribonuclease.</title>
        <authorList>
            <person name="Koerner C.G."/>
            <person name="Wahle E."/>
        </authorList>
    </citation>
    <scope>ENZYME ACTIVITY</scope>
</reference>
<reference key="4">
    <citation type="journal article" date="2000" name="EMBO J.">
        <title>Cap-dependent deadenylation of mRNA.</title>
        <authorList>
            <person name="Dehlin E."/>
            <person name="Wormington M."/>
            <person name="Koerner C.G."/>
            <person name="Wahle E."/>
        </authorList>
    </citation>
    <scope>FUNCTION</scope>
</reference>
<proteinExistence type="evidence at protein level"/>
<keyword id="KW-0007">Acetylation</keyword>
<keyword id="KW-0963">Cytoplasm</keyword>
<keyword id="KW-0903">Direct protein sequencing</keyword>
<keyword id="KW-0269">Exonuclease</keyword>
<keyword id="KW-0378">Hydrolase</keyword>
<keyword id="KW-0460">Magnesium</keyword>
<keyword id="KW-0479">Metal-binding</keyword>
<keyword id="KW-0866">Nonsense-mediated mRNA decay</keyword>
<keyword id="KW-0540">Nuclease</keyword>
<keyword id="KW-0539">Nucleus</keyword>
<keyword id="KW-0597">Phosphoprotein</keyword>
<keyword id="KW-1185">Reference proteome</keyword>
<keyword id="KW-0694">RNA-binding</keyword>
<name>PARN_BOVIN</name>
<dbReference type="EC" id="3.1.13.4"/>
<dbReference type="EMBL" id="BC150015">
    <property type="protein sequence ID" value="AAI50016.1"/>
    <property type="molecule type" value="mRNA"/>
</dbReference>
<dbReference type="RefSeq" id="NP_001094588.1">
    <property type="nucleotide sequence ID" value="NM_001101118.2"/>
</dbReference>
<dbReference type="SMR" id="P69341"/>
<dbReference type="FunCoup" id="P69341">
    <property type="interactions" value="3404"/>
</dbReference>
<dbReference type="STRING" id="9913.ENSBTAP00000064801"/>
<dbReference type="PaxDb" id="9913-ENSBTAP00000024087"/>
<dbReference type="Ensembl" id="ENSBTAT00000024087.7">
    <property type="protein sequence ID" value="ENSBTAP00000024087.7"/>
    <property type="gene ID" value="ENSBTAG00000018097.7"/>
</dbReference>
<dbReference type="GeneID" id="524155"/>
<dbReference type="KEGG" id="bta:524155"/>
<dbReference type="CTD" id="5073"/>
<dbReference type="eggNOG" id="KOG1990">
    <property type="taxonomic scope" value="Eukaryota"/>
</dbReference>
<dbReference type="GeneTree" id="ENSGT00940000153167"/>
<dbReference type="HOGENOM" id="CLU_018030_1_1_1"/>
<dbReference type="InParanoid" id="P69341"/>
<dbReference type="OrthoDB" id="1432093at2759"/>
<dbReference type="TreeFam" id="TF314502"/>
<dbReference type="CD-CODE" id="D7FE2080">
    <property type="entry name" value="Nucleolus"/>
</dbReference>
<dbReference type="Proteomes" id="UP000009136">
    <property type="component" value="Chromosome 25"/>
</dbReference>
<dbReference type="GO" id="GO:0005737">
    <property type="term" value="C:cytoplasm"/>
    <property type="evidence" value="ECO:0007669"/>
    <property type="project" value="UniProtKB-SubCell"/>
</dbReference>
<dbReference type="GO" id="GO:0005730">
    <property type="term" value="C:nucleolus"/>
    <property type="evidence" value="ECO:0007669"/>
    <property type="project" value="UniProtKB-SubCell"/>
</dbReference>
<dbReference type="GO" id="GO:0005634">
    <property type="term" value="C:nucleus"/>
    <property type="evidence" value="ECO:0000318"/>
    <property type="project" value="GO_Central"/>
</dbReference>
<dbReference type="GO" id="GO:0000175">
    <property type="term" value="F:3'-5'-RNA exonuclease activity"/>
    <property type="evidence" value="ECO:0000318"/>
    <property type="project" value="GO_Central"/>
</dbReference>
<dbReference type="GO" id="GO:0043169">
    <property type="term" value="F:cation binding"/>
    <property type="evidence" value="ECO:0000250"/>
    <property type="project" value="UniProtKB"/>
</dbReference>
<dbReference type="GO" id="GO:0046872">
    <property type="term" value="F:metal ion binding"/>
    <property type="evidence" value="ECO:0007669"/>
    <property type="project" value="UniProtKB-KW"/>
</dbReference>
<dbReference type="GO" id="GO:0004535">
    <property type="term" value="F:poly(A)-specific ribonuclease activity"/>
    <property type="evidence" value="ECO:0000250"/>
    <property type="project" value="UniProtKB"/>
</dbReference>
<dbReference type="GO" id="GO:0003723">
    <property type="term" value="F:RNA binding"/>
    <property type="evidence" value="ECO:0000250"/>
    <property type="project" value="UniProtKB"/>
</dbReference>
<dbReference type="GO" id="GO:0000495">
    <property type="term" value="P:box H/ACA sno(s)RNA 3'-end processing"/>
    <property type="evidence" value="ECO:0000250"/>
    <property type="project" value="UniProtKB"/>
</dbReference>
<dbReference type="GO" id="GO:0010587">
    <property type="term" value="P:miRNA catabolic process"/>
    <property type="evidence" value="ECO:0000250"/>
    <property type="project" value="UniProtKB"/>
</dbReference>
<dbReference type="GO" id="GO:0000184">
    <property type="term" value="P:nuclear-transcribed mRNA catabolic process, nonsense-mediated decay"/>
    <property type="evidence" value="ECO:0007669"/>
    <property type="project" value="UniProtKB-KW"/>
</dbReference>
<dbReference type="GO" id="GO:0000289">
    <property type="term" value="P:nuclear-transcribed mRNA poly(A) tail shortening"/>
    <property type="evidence" value="ECO:0000318"/>
    <property type="project" value="GO_Central"/>
</dbReference>
<dbReference type="GO" id="GO:0071051">
    <property type="term" value="P:poly(A)-dependent snoRNA 3'-end processing"/>
    <property type="evidence" value="ECO:0000250"/>
    <property type="project" value="UniProtKB"/>
</dbReference>
<dbReference type="GO" id="GO:1990431">
    <property type="term" value="P:priRNA 3'-end processing"/>
    <property type="evidence" value="ECO:0000318"/>
    <property type="project" value="GO_Central"/>
</dbReference>
<dbReference type="GO" id="GO:1990432">
    <property type="term" value="P:siRNA 3'-end processing"/>
    <property type="evidence" value="ECO:0000318"/>
    <property type="project" value="GO_Central"/>
</dbReference>
<dbReference type="CDD" id="cd02637">
    <property type="entry name" value="R3H_PARN"/>
    <property type="match status" value="1"/>
</dbReference>
<dbReference type="CDD" id="cd12428">
    <property type="entry name" value="RRM_PARN"/>
    <property type="match status" value="1"/>
</dbReference>
<dbReference type="FunFam" id="3.30.1370.50:FF:000014">
    <property type="entry name" value="Poly(A)-specific ribonuclease PARN"/>
    <property type="match status" value="1"/>
</dbReference>
<dbReference type="FunFam" id="3.30.420.10:FF:000035">
    <property type="entry name" value="Poly(A)-specific ribonuclease PARN"/>
    <property type="match status" value="1"/>
</dbReference>
<dbReference type="FunFam" id="3.30.70.330:FF:000196">
    <property type="entry name" value="Poly(A)-specific ribonuclease PARN"/>
    <property type="match status" value="1"/>
</dbReference>
<dbReference type="FunFam" id="3.30.420.10:FF:000042">
    <property type="entry name" value="poly(A)-specific ribonuclease PARN"/>
    <property type="match status" value="1"/>
</dbReference>
<dbReference type="Gene3D" id="3.30.70.330">
    <property type="match status" value="1"/>
</dbReference>
<dbReference type="Gene3D" id="3.30.420.10">
    <property type="entry name" value="Ribonuclease H-like superfamily/Ribonuclease H"/>
    <property type="match status" value="2"/>
</dbReference>
<dbReference type="InterPro" id="IPR051181">
    <property type="entry name" value="CAF1_poly(A)_ribonucleases"/>
</dbReference>
<dbReference type="InterPro" id="IPR012677">
    <property type="entry name" value="Nucleotide-bd_a/b_plait_sf"/>
</dbReference>
<dbReference type="InterPro" id="IPR034042">
    <property type="entry name" value="PARN_R3H"/>
</dbReference>
<dbReference type="InterPro" id="IPR014789">
    <property type="entry name" value="PolyA-riboNase_RNA-binding"/>
</dbReference>
<dbReference type="InterPro" id="IPR001374">
    <property type="entry name" value="R3H_dom"/>
</dbReference>
<dbReference type="InterPro" id="IPR036867">
    <property type="entry name" value="R3H_dom_sf"/>
</dbReference>
<dbReference type="InterPro" id="IPR035979">
    <property type="entry name" value="RBD_domain_sf"/>
</dbReference>
<dbReference type="InterPro" id="IPR006941">
    <property type="entry name" value="RNase_CAF1"/>
</dbReference>
<dbReference type="InterPro" id="IPR012337">
    <property type="entry name" value="RNaseH-like_sf"/>
</dbReference>
<dbReference type="InterPro" id="IPR036397">
    <property type="entry name" value="RNaseH_sf"/>
</dbReference>
<dbReference type="PANTHER" id="PTHR15092">
    <property type="entry name" value="POLY A -SPECIFIC RIBONUCLEASE/TARGET OF EGR1, MEMBER 1"/>
    <property type="match status" value="1"/>
</dbReference>
<dbReference type="PANTHER" id="PTHR15092:SF44">
    <property type="entry name" value="POLY(A)-SPECIFIC RIBONUCLEASE PARN"/>
    <property type="match status" value="1"/>
</dbReference>
<dbReference type="Pfam" id="PF04857">
    <property type="entry name" value="CAF1"/>
    <property type="match status" value="1"/>
</dbReference>
<dbReference type="Pfam" id="PF08675">
    <property type="entry name" value="RNA_bind"/>
    <property type="match status" value="1"/>
</dbReference>
<dbReference type="SUPFAM" id="SSF82708">
    <property type="entry name" value="R3H domain"/>
    <property type="match status" value="1"/>
</dbReference>
<dbReference type="SUPFAM" id="SSF53098">
    <property type="entry name" value="Ribonuclease H-like"/>
    <property type="match status" value="1"/>
</dbReference>
<dbReference type="SUPFAM" id="SSF54928">
    <property type="entry name" value="RNA-binding domain, RBD"/>
    <property type="match status" value="1"/>
</dbReference>
<dbReference type="PROSITE" id="PS51061">
    <property type="entry name" value="R3H"/>
    <property type="match status" value="1"/>
</dbReference>
<sequence>MEIIRSNFKSNLHKVYQAIEEADFFAIDGEFSGISDGPSVTALTNGFDTPEERYQKLKKHSMDFLLFQFGLCTFKYDYTDSKYITKSFNFYVFPKPFNRSSPDVKFVCQSSSIDFLASQGFDFNKVFRNGIPYLNQEEERQLREQYDEKRSQSNGAGALSYTSPNTSKCPVTIPDDQKKFIDQVVEKIEDLLQSEENKNLDLEPCTGFQRKLIYQTLSWKYPKGIHVETLETEKKERYIVISKVDEEERKRREQQKHAKEQEELNDAVGFSRVIHAIANSGKLVIGHNMLLDVMHTVHQFYCPLPADLNEFKEMTTCVFPRLLDTKLMASTQPFKDIINNTSLAELEKRLKETPFNPPKVESAEGFPSYDTASEQLHEAGYDAYITGLCFISMANYLGSFLSPPKSHVSARSKLIEPFFNKLFLMRVMDIPYLNLEGPDLQPKRDHVLHVTFPKEWKTSDLYQLFSAFGNIQISWIDDTSAFVSLSQPEQVPIAVNTSKYAESYRIQTYADYVGKKREEKQMKRKWTEDSWKEVEPKRLNTQCGSYSLQNHHYHANSLTATSTVGKRNLSPSRAEAGLEARASGEISDTELEQTDPCAEPLSEGRKKAKKLKRMKKDLSPTGSISDSSAKLFEVPDTW</sequence>
<comment type="function">
    <text evidence="1 5 7">3'-exoribonuclease that has a preference for poly(A) tails of mRNAs, thereby efficiently degrading poly(A) tails. Exonucleolytic degradation of the poly(A) tail is often the first step in the decay of eukaryotic mRNAs and is also used to silence certain maternal mRNAs translationally during oocyte maturation and early embryonic development. Involved in nonsense-mediated mRNA decay, a critical process of selective degradation of mRNAs that contain premature stop codons. Also involved in degradation of inherently unstable mRNAs that contain AU-rich elements (AREs) in their 3'-UTR, possibly via its interaction with KHSRP. Probably mediates the removal of poly(A) tails of AREs mRNAs, which constitutes the first step of destabilization (By similarity). Interacts with both the 3'-end poly(A) tail and the 5'-end cap structure during degradation, the interaction with the cap structure being required for an efficient degradation of poly(A) tails (By similarity) (PubMed:10698948, PubMed:9736620). Also able to recognize poly(A) tails of microRNAs such as MIR21 and H/ACA box snoRNAs (small nucleolar RNAs) leading to microRNAs degradation or snoRNA increased stability (By similarity).</text>
</comment>
<comment type="catalytic activity">
    <reaction evidence="6">
        <text>Exonucleolytic cleavage of poly(A) to 5'-AMP.</text>
        <dbReference type="EC" id="3.1.13.4"/>
    </reaction>
</comment>
<comment type="cofactor">
    <cofactor evidence="1">
        <name>Mg(2+)</name>
        <dbReference type="ChEBI" id="CHEBI:18420"/>
    </cofactor>
    <text evidence="1">Divalent metal cations. Mg(2+) is the most probable.</text>
</comment>
<comment type="subunit">
    <text evidence="1">Homodimer. Found in a mRNA decay complex with RENT1, RENT2 and RENT3B. Interacts with KHSRP. Interacts with CELF1/CUGBP1. Interacts with ZC3HAV1 in an RNA-independent manner. Interacts with DHX36.</text>
</comment>
<comment type="subcellular location">
    <subcellularLocation>
        <location evidence="1">Nucleus</location>
    </subcellularLocation>
    <subcellularLocation>
        <location evidence="1">Cytoplasm</location>
    </subcellularLocation>
    <subcellularLocation>
        <location evidence="1">Nucleus</location>
        <location evidence="1">Nucleolus</location>
    </subcellularLocation>
    <text evidence="1">Some nuclear fraction is nucleolar.</text>
</comment>
<comment type="PTM">
    <text evidence="1">Phosphorylation by MAPKAPK2, preventing GADD45A mRNA degradation after genotoxic stress.</text>
</comment>
<comment type="similarity">
    <text evidence="8">Belongs to the CAF1 family.</text>
</comment>
<evidence type="ECO:0000250" key="1">
    <source>
        <dbReference type="UniProtKB" id="O95453"/>
    </source>
</evidence>
<evidence type="ECO:0000250" key="2">
    <source>
        <dbReference type="UniProtKB" id="Q8VDG3"/>
    </source>
</evidence>
<evidence type="ECO:0000255" key="3">
    <source>
        <dbReference type="PROSITE-ProRule" id="PRU00382"/>
    </source>
</evidence>
<evidence type="ECO:0000256" key="4">
    <source>
        <dbReference type="SAM" id="MobiDB-lite"/>
    </source>
</evidence>
<evidence type="ECO:0000269" key="5">
    <source>
    </source>
</evidence>
<evidence type="ECO:0000269" key="6">
    <source>
    </source>
</evidence>
<evidence type="ECO:0000269" key="7">
    <source>
    </source>
</evidence>
<evidence type="ECO:0000305" key="8"/>
<protein>
    <recommendedName>
        <fullName>Poly(A)-specific ribonuclease PARN</fullName>
        <ecNumber>3.1.13.4</ecNumber>
    </recommendedName>
    <alternativeName>
        <fullName>Deadenylating nuclease</fullName>
    </alternativeName>
    <alternativeName>
        <fullName>Deadenylation nuclease</fullName>
    </alternativeName>
    <alternativeName>
        <fullName>Polyadenylate-specific ribonuclease</fullName>
    </alternativeName>
</protein>
<feature type="chain" id="PRO_0000212850" description="Poly(A)-specific ribonuclease PARN">
    <location>
        <begin position="1"/>
        <end position="638"/>
    </location>
</feature>
<feature type="domain" description="R3H" evidence="3">
    <location>
        <begin position="178"/>
        <end position="245"/>
    </location>
</feature>
<feature type="region of interest" description="Disordered" evidence="4">
    <location>
        <begin position="143"/>
        <end position="165"/>
    </location>
</feature>
<feature type="region of interest" description="Disordered" evidence="4">
    <location>
        <begin position="573"/>
        <end position="638"/>
    </location>
</feature>
<feature type="compositionally biased region" description="Polar residues" evidence="4">
    <location>
        <begin position="152"/>
        <end position="165"/>
    </location>
</feature>
<feature type="compositionally biased region" description="Basic residues" evidence="4">
    <location>
        <begin position="606"/>
        <end position="615"/>
    </location>
</feature>
<feature type="binding site" evidence="8">
    <location>
        <position position="28"/>
    </location>
    <ligand>
        <name>a divalent metal cation</name>
        <dbReference type="ChEBI" id="CHEBI:60240"/>
        <note>catalytic</note>
    </ligand>
</feature>
<feature type="binding site" evidence="8">
    <location>
        <position position="30"/>
    </location>
    <ligand>
        <name>a divalent metal cation</name>
        <dbReference type="ChEBI" id="CHEBI:60240"/>
        <note>catalytic</note>
    </ligand>
</feature>
<feature type="binding site" evidence="8">
    <location>
        <position position="292"/>
    </location>
    <ligand>
        <name>a divalent metal cation</name>
        <dbReference type="ChEBI" id="CHEBI:60240"/>
        <note>catalytic</note>
    </ligand>
</feature>
<feature type="binding site" evidence="8">
    <location>
        <position position="382"/>
    </location>
    <ligand>
        <name>a divalent metal cation</name>
        <dbReference type="ChEBI" id="CHEBI:60240"/>
        <note>catalytic</note>
    </ligand>
</feature>
<feature type="site" description="Interaction with poly(A)" evidence="1">
    <location>
        <position position="326"/>
    </location>
</feature>
<feature type="modified residue" description="Phosphoserine" evidence="1">
    <location>
        <position position="163"/>
    </location>
</feature>
<feature type="modified residue" description="Phosphoserine" evidence="1">
    <location>
        <position position="167"/>
    </location>
</feature>
<feature type="modified residue" description="N6-acetyllysine" evidence="1">
    <location>
        <position position="220"/>
    </location>
</feature>
<feature type="modified residue" description="N6-acetyllysine" evidence="1">
    <location>
        <position position="499"/>
    </location>
</feature>
<feature type="modified residue" description="Phosphoserine" evidence="1">
    <location>
        <position position="530"/>
    </location>
</feature>
<feature type="modified residue" description="Phosphoserine; by MAPKAPK2" evidence="1">
    <location>
        <position position="557"/>
    </location>
</feature>
<feature type="modified residue" description="Phosphoserine" evidence="2">
    <location>
        <position position="583"/>
    </location>
</feature>
<feature type="modified residue" description="Phosphoserine" evidence="2">
    <location>
        <position position="587"/>
    </location>
</feature>
<feature type="modified residue" description="Phosphoserine" evidence="1">
    <location>
        <position position="619"/>
    </location>
</feature>
<feature type="modified residue" description="Phosphoserine" evidence="1">
    <location>
        <position position="623"/>
    </location>
</feature>
<feature type="modified residue" description="Phosphoserine" evidence="1">
    <location>
        <position position="627"/>
    </location>
</feature>
<feature type="sequence conflict" description="In Ref. 2; AA sequence." evidence="8" ref="2">
    <original>R</original>
    <variation>W</variation>
    <location>
        <position position="505"/>
    </location>
</feature>